<name>A1KA4_LOXDE</name>
<feature type="chain" id="PRO_0000392776" description="Dermonecrotic toxin LdSicTox-alphaIB1aiv">
    <location>
        <begin position="1" status="less than"/>
        <end position="273"/>
    </location>
</feature>
<feature type="active site" evidence="5">
    <location>
        <position position="5"/>
    </location>
</feature>
<feature type="active site" description="Nucleophile" evidence="5">
    <location>
        <position position="41"/>
    </location>
</feature>
<feature type="binding site" evidence="5">
    <location>
        <position position="25"/>
    </location>
    <ligand>
        <name>Mg(2+)</name>
        <dbReference type="ChEBI" id="CHEBI:18420"/>
    </ligand>
</feature>
<feature type="binding site" evidence="5">
    <location>
        <position position="27"/>
    </location>
    <ligand>
        <name>Mg(2+)</name>
        <dbReference type="ChEBI" id="CHEBI:18420"/>
    </ligand>
</feature>
<feature type="binding site" evidence="5">
    <location>
        <position position="85"/>
    </location>
    <ligand>
        <name>Mg(2+)</name>
        <dbReference type="ChEBI" id="CHEBI:18420"/>
    </ligand>
</feature>
<feature type="glycosylation site" description="N-linked (GlcNAc...) asparagine" evidence="6">
    <location>
        <position position="250"/>
    </location>
</feature>
<feature type="disulfide bond" evidence="3">
    <location>
        <begin position="45"/>
        <end position="51"/>
    </location>
</feature>
<feature type="disulfide bond" evidence="3">
    <location>
        <begin position="47"/>
        <end position="190"/>
    </location>
</feature>
<feature type="non-terminal residue">
    <location>
        <position position="1"/>
    </location>
</feature>
<sequence>WIMGHMVNAIAQIDEFVNLGANSIETDVSFDDSANPEYTYHGVPCDCGRTCTKWEYFNEFLKGLRKATTPGDSKYHEKLVLVVFDLKTSSLYDNQASDAGKKLAKSLLQNYWNNGNNGGRAYIVLSIPNLAHYKLITGFKETLTSEGHPELMDKVGYGFSGNDEIGDVAKTYKKAGVTGHVWQSDGITNCLLRGLDRVRKAVANRDSSNGYINKVYYWIVDKRATTRDALDAGVDGIMTNYPDVIADVLNESAYKAKFRIASYDDNPWETFKN</sequence>
<comment type="function">
    <text evidence="1 3">Dermonecrotic toxins cleave the phosphodiester linkage between the phosphate and headgroup of certain phospholipids (sphingolipid and lysolipid substrates), forming an alcohol (often choline) and a cyclic phosphate (By similarity). This toxin acts on sphingomyelin (SM) (By similarity). It may also act on ceramide phosphoethanolamine (CPE), lysophosphatidylcholine (LPC) and lysophosphatidylethanolamine (LPE), but not on lysophosphatidylserine (LPS), and lysophosphatidylglycerol (LPG) (By similarity). It acts by transphosphatidylation, releasing exclusively cyclic phosphate products as second products (By similarity). Induces dermonecrosis, hemolysis, increased vascular permeability, edema, inflammatory response, and platelet aggregation (By similarity).</text>
</comment>
<comment type="catalytic activity">
    <reaction evidence="1">
        <text>an N-(acyl)-sphingosylphosphocholine = an N-(acyl)-sphingosyl-1,3-cyclic phosphate + choline</text>
        <dbReference type="Rhea" id="RHEA:60652"/>
        <dbReference type="ChEBI" id="CHEBI:15354"/>
        <dbReference type="ChEBI" id="CHEBI:64583"/>
        <dbReference type="ChEBI" id="CHEBI:143892"/>
    </reaction>
</comment>
<comment type="catalytic activity">
    <reaction evidence="1">
        <text>an N-(acyl)-sphingosylphosphoethanolamine = an N-(acyl)-sphingosyl-1,3-cyclic phosphate + ethanolamine</text>
        <dbReference type="Rhea" id="RHEA:60648"/>
        <dbReference type="ChEBI" id="CHEBI:57603"/>
        <dbReference type="ChEBI" id="CHEBI:143891"/>
        <dbReference type="ChEBI" id="CHEBI:143892"/>
    </reaction>
</comment>
<comment type="catalytic activity">
    <reaction evidence="1">
        <text>a 1-acyl-sn-glycero-3-phosphocholine = a 1-acyl-sn-glycero-2,3-cyclic phosphate + choline</text>
        <dbReference type="Rhea" id="RHEA:60700"/>
        <dbReference type="ChEBI" id="CHEBI:15354"/>
        <dbReference type="ChEBI" id="CHEBI:58168"/>
        <dbReference type="ChEBI" id="CHEBI:143947"/>
    </reaction>
</comment>
<comment type="catalytic activity">
    <reaction evidence="1">
        <text>a 1-acyl-sn-glycero-3-phosphoethanolamine = a 1-acyl-sn-glycero-2,3-cyclic phosphate + ethanolamine</text>
        <dbReference type="Rhea" id="RHEA:60704"/>
        <dbReference type="ChEBI" id="CHEBI:57603"/>
        <dbReference type="ChEBI" id="CHEBI:64381"/>
        <dbReference type="ChEBI" id="CHEBI:143947"/>
    </reaction>
</comment>
<comment type="cofactor">
    <cofactor evidence="5">
        <name>Mg(2+)</name>
        <dbReference type="ChEBI" id="CHEBI:18420"/>
    </cofactor>
    <text evidence="5">Binds 1 Mg(2+) ion per subunit.</text>
</comment>
<comment type="subcellular location">
    <subcellularLocation>
        <location evidence="9">Secreted</location>
    </subcellularLocation>
</comment>
<comment type="tissue specificity">
    <text evidence="9">Expressed by the venom gland.</text>
</comment>
<comment type="similarity">
    <text evidence="8">Belongs to the arthropod phospholipase D family. Class II subfamily.</text>
</comment>
<comment type="caution">
    <text evidence="1 2 4">The most common activity assay for dermonecrotic toxins detects enzymatic activity by monitoring choline release from substrate. Liberation of choline from sphingomyelin (SM) or lysophosphatidylcholine (LPC) is commonly assumed to result from substrate hydrolysis, giving either ceramide-1-phosphate (C1P) or lysophosphatidic acid (LPA), respectively, as a second product. However, two studies from Lajoie and colleagues (2013 and 2015) report the observation of exclusive formation of cyclic phosphate products as second products, resulting from intramolecular transphosphatidylation. Cyclic phosphates have vastly different biological properties from their monoester counterparts, and they may be relevant to the pathology of brown spider envenomation.</text>
</comment>
<protein>
    <recommendedName>
        <fullName evidence="7">Dermonecrotic toxin LdSicTox-alphaIB1aiv</fullName>
        <ecNumber evidence="4">4.6.1.-</ecNumber>
    </recommendedName>
    <alternativeName>
        <fullName>Phospholipase D</fullName>
        <shortName>PLD</shortName>
    </alternativeName>
    <alternativeName>
        <fullName>Sphingomyelin phosphodiesterase D</fullName>
        <shortName>SMD</shortName>
        <shortName>SMase D</shortName>
        <shortName>Sphingomyelinase D</shortName>
    </alternativeName>
</protein>
<proteinExistence type="evidence at transcript level"/>
<organism>
    <name type="scientific">Loxosceles deserta</name>
    <name type="common">Desert recluse spider</name>
    <dbReference type="NCBI Taxonomy" id="424440"/>
    <lineage>
        <taxon>Eukaryota</taxon>
        <taxon>Metazoa</taxon>
        <taxon>Ecdysozoa</taxon>
        <taxon>Arthropoda</taxon>
        <taxon>Chelicerata</taxon>
        <taxon>Arachnida</taxon>
        <taxon>Araneae</taxon>
        <taxon>Araneomorphae</taxon>
        <taxon>Haplogynae</taxon>
        <taxon>Scytodoidea</taxon>
        <taxon>Sicariidae</taxon>
        <taxon>Loxosceles</taxon>
    </lineage>
</organism>
<dbReference type="EC" id="4.6.1.-" evidence="4"/>
<dbReference type="EMBL" id="FJ171404">
    <property type="protein sequence ID" value="ACN48900.1"/>
    <property type="molecule type" value="mRNA"/>
</dbReference>
<dbReference type="SMR" id="C0JAW9"/>
<dbReference type="GO" id="GO:0005576">
    <property type="term" value="C:extracellular region"/>
    <property type="evidence" value="ECO:0007669"/>
    <property type="project" value="UniProtKB-SubCell"/>
</dbReference>
<dbReference type="GO" id="GO:0016829">
    <property type="term" value="F:lyase activity"/>
    <property type="evidence" value="ECO:0007669"/>
    <property type="project" value="UniProtKB-KW"/>
</dbReference>
<dbReference type="GO" id="GO:0046872">
    <property type="term" value="F:metal ion binding"/>
    <property type="evidence" value="ECO:0007669"/>
    <property type="project" value="UniProtKB-KW"/>
</dbReference>
<dbReference type="GO" id="GO:0008081">
    <property type="term" value="F:phosphoric diester hydrolase activity"/>
    <property type="evidence" value="ECO:0007669"/>
    <property type="project" value="InterPro"/>
</dbReference>
<dbReference type="GO" id="GO:0090729">
    <property type="term" value="F:toxin activity"/>
    <property type="evidence" value="ECO:0007669"/>
    <property type="project" value="UniProtKB-KW"/>
</dbReference>
<dbReference type="GO" id="GO:0031640">
    <property type="term" value="P:killing of cells of another organism"/>
    <property type="evidence" value="ECO:0007669"/>
    <property type="project" value="UniProtKB-KW"/>
</dbReference>
<dbReference type="GO" id="GO:0016042">
    <property type="term" value="P:lipid catabolic process"/>
    <property type="evidence" value="ECO:0007669"/>
    <property type="project" value="UniProtKB-KW"/>
</dbReference>
<dbReference type="CDD" id="cd08576">
    <property type="entry name" value="GDPD_like_SMaseD_PLD"/>
    <property type="match status" value="1"/>
</dbReference>
<dbReference type="Gene3D" id="3.20.20.190">
    <property type="entry name" value="Phosphatidylinositol (PI) phosphodiesterase"/>
    <property type="match status" value="1"/>
</dbReference>
<dbReference type="InterPro" id="IPR017946">
    <property type="entry name" value="PLC-like_Pdiesterase_TIM-brl"/>
</dbReference>
<dbReference type="SUPFAM" id="SSF51695">
    <property type="entry name" value="PLC-like phosphodiesterases"/>
    <property type="match status" value="1"/>
</dbReference>
<reference key="1">
    <citation type="journal article" date="2009" name="Mol. Biol. Evol.">
        <title>Molecular evolution, functional variation, and proposed nomenclature of the gene family that includes sphingomyelinase D in sicariid spider venoms.</title>
        <authorList>
            <person name="Binford G.J."/>
            <person name="Bodner M.R."/>
            <person name="Cordes M.H."/>
            <person name="Baldwin K.L."/>
            <person name="Rynerson M.R."/>
            <person name="Burns S.N."/>
            <person name="Zobel-Thropp P.A."/>
        </authorList>
    </citation>
    <scope>NUCLEOTIDE SEQUENCE [MRNA]</scope>
    <scope>NOMENCLATURE</scope>
    <source>
        <tissue>Venom gland</tissue>
    </source>
</reference>
<keyword id="KW-0204">Cytolysis</keyword>
<keyword id="KW-1061">Dermonecrotic toxin</keyword>
<keyword id="KW-1015">Disulfide bond</keyword>
<keyword id="KW-0325">Glycoprotein</keyword>
<keyword id="KW-0354">Hemolysis</keyword>
<keyword id="KW-0442">Lipid degradation</keyword>
<keyword id="KW-0443">Lipid metabolism</keyword>
<keyword id="KW-0456">Lyase</keyword>
<keyword id="KW-0460">Magnesium</keyword>
<keyword id="KW-0479">Metal-binding</keyword>
<keyword id="KW-0964">Secreted</keyword>
<keyword id="KW-0800">Toxin</keyword>
<evidence type="ECO:0000250" key="1">
    <source>
        <dbReference type="UniProtKB" id="A0A0D4WTV1"/>
    </source>
</evidence>
<evidence type="ECO:0000250" key="2">
    <source>
        <dbReference type="UniProtKB" id="A0A0D4WV12"/>
    </source>
</evidence>
<evidence type="ECO:0000250" key="3">
    <source>
        <dbReference type="UniProtKB" id="P0CE80"/>
    </source>
</evidence>
<evidence type="ECO:0000250" key="4">
    <source>
        <dbReference type="UniProtKB" id="Q4ZFU2"/>
    </source>
</evidence>
<evidence type="ECO:0000250" key="5">
    <source>
        <dbReference type="UniProtKB" id="Q8I914"/>
    </source>
</evidence>
<evidence type="ECO:0000255" key="6"/>
<evidence type="ECO:0000303" key="7">
    <source>
    </source>
</evidence>
<evidence type="ECO:0000305" key="8"/>
<evidence type="ECO:0000305" key="9">
    <source>
    </source>
</evidence>
<accession>C0JAW9</accession>